<protein>
    <recommendedName>
        <fullName>Uncharacterized protein At4g15970</fullName>
    </recommendedName>
</protein>
<name>Y4597_ARATH</name>
<dbReference type="EMBL" id="Z97340">
    <property type="protein sequence ID" value="CAB10376.1"/>
    <property type="status" value="ALT_SEQ"/>
    <property type="molecule type" value="Genomic_DNA"/>
</dbReference>
<dbReference type="EMBL" id="AL161542">
    <property type="protein sequence ID" value="CAB78639.1"/>
    <property type="status" value="ALT_SEQ"/>
    <property type="molecule type" value="Genomic_DNA"/>
</dbReference>
<dbReference type="EMBL" id="CP002687">
    <property type="protein sequence ID" value="AEE83675.1"/>
    <property type="status" value="ALT_INIT"/>
    <property type="molecule type" value="Genomic_DNA"/>
</dbReference>
<dbReference type="PIR" id="F71425">
    <property type="entry name" value="F71425"/>
</dbReference>
<dbReference type="RefSeq" id="NP_567479.5">
    <property type="nucleotide sequence ID" value="NM_117689.5"/>
</dbReference>
<dbReference type="CAZy" id="GT77">
    <property type="family name" value="Glycosyltransferase Family 77"/>
</dbReference>
<dbReference type="PaxDb" id="3702-AT4G15970.1"/>
<dbReference type="GeneID" id="827280"/>
<dbReference type="KEGG" id="ath:AT4G15970"/>
<dbReference type="Araport" id="AT4G15970"/>
<dbReference type="TAIR" id="AT4G15970"/>
<dbReference type="eggNOG" id="ENOG502R8HD">
    <property type="taxonomic scope" value="Eukaryota"/>
</dbReference>
<dbReference type="HOGENOM" id="CLU_034507_2_1_1"/>
<dbReference type="InParanoid" id="P0C042"/>
<dbReference type="PhylomeDB" id="P0C042"/>
<dbReference type="PRO" id="PR:P0C042"/>
<dbReference type="Proteomes" id="UP000006548">
    <property type="component" value="Chromosome 4"/>
</dbReference>
<dbReference type="ExpressionAtlas" id="P0C042">
    <property type="expression patterns" value="baseline and differential"/>
</dbReference>
<dbReference type="InterPro" id="IPR044821">
    <property type="entry name" value="At1g28695/At4g15970-like"/>
</dbReference>
<dbReference type="InterPro" id="IPR005069">
    <property type="entry name" value="Nucl-diP-sugar_transferase"/>
</dbReference>
<dbReference type="PANTHER" id="PTHR46038">
    <property type="entry name" value="EXPRESSED PROTEIN-RELATED"/>
    <property type="match status" value="1"/>
</dbReference>
<dbReference type="PANTHER" id="PTHR46038:SF13">
    <property type="entry name" value="GLYCOSYLTRANSFERASE"/>
    <property type="match status" value="1"/>
</dbReference>
<dbReference type="Pfam" id="PF03407">
    <property type="entry name" value="Nucleotid_trans"/>
    <property type="match status" value="1"/>
</dbReference>
<proteinExistence type="evidence at transcript level"/>
<comment type="sequence caution" evidence="1">
    <conflict type="erroneous initiation">
        <sequence resource="EMBL-CDS" id="AEE83675"/>
    </conflict>
    <text>Truncated N-terminus.</text>
</comment>
<comment type="sequence caution" evidence="1">
    <conflict type="erroneous gene model prediction">
        <sequence resource="EMBL-CDS" id="CAB10376"/>
    </conflict>
    <text>The predicted gene At4g15970 has been split into 2 genes: At4g15970 and At4g15975.</text>
</comment>
<comment type="sequence caution" evidence="1">
    <conflict type="erroneous gene model prediction">
        <sequence resource="EMBL-CDS" id="CAB78639"/>
    </conflict>
    <text>The predicted gene At4g15970 has been split into 2 genes: At4g15970 and At4g15975.</text>
</comment>
<feature type="chain" id="PRO_0000220610" description="Uncharacterized protein At4g15970">
    <location>
        <begin position="1"/>
        <end position="367"/>
    </location>
</feature>
<feature type="sequence conflict" description="In Ref. 3; AEE83675." evidence="1" ref="3">
    <original>A</original>
    <variation>T</variation>
    <location>
        <position position="193"/>
    </location>
</feature>
<keyword id="KW-1185">Reference proteome</keyword>
<reference key="1">
    <citation type="journal article" date="1998" name="Nature">
        <title>Analysis of 1.9 Mb of contiguous sequence from chromosome 4 of Arabidopsis thaliana.</title>
        <authorList>
            <person name="Bevan M."/>
            <person name="Bancroft I."/>
            <person name="Bent E."/>
            <person name="Love K."/>
            <person name="Goodman H.M."/>
            <person name="Dean C."/>
            <person name="Bergkamp R."/>
            <person name="Dirkse W."/>
            <person name="van Staveren M."/>
            <person name="Stiekema W."/>
            <person name="Drost L."/>
            <person name="Ridley P."/>
            <person name="Hudson S.-A."/>
            <person name="Patel K."/>
            <person name="Murphy G."/>
            <person name="Piffanelli P."/>
            <person name="Wedler H."/>
            <person name="Wedler E."/>
            <person name="Wambutt R."/>
            <person name="Weitzenegger T."/>
            <person name="Pohl T."/>
            <person name="Terryn N."/>
            <person name="Gielen J."/>
            <person name="Villarroel R."/>
            <person name="De Clercq R."/>
            <person name="van Montagu M."/>
            <person name="Lecharny A."/>
            <person name="Aubourg S."/>
            <person name="Gy I."/>
            <person name="Kreis M."/>
            <person name="Lao N."/>
            <person name="Kavanagh T."/>
            <person name="Hempel S."/>
            <person name="Kotter P."/>
            <person name="Entian K.-D."/>
            <person name="Rieger M."/>
            <person name="Schaefer M."/>
            <person name="Funk B."/>
            <person name="Mueller-Auer S."/>
            <person name="Silvey M."/>
            <person name="James R."/>
            <person name="Monfort A."/>
            <person name="Pons A."/>
            <person name="Puigdomenech P."/>
            <person name="Douka A."/>
            <person name="Voukelatou E."/>
            <person name="Milioni D."/>
            <person name="Hatzopoulos P."/>
            <person name="Piravandi E."/>
            <person name="Obermaier B."/>
            <person name="Hilbert H."/>
            <person name="Duesterhoeft A."/>
            <person name="Moores T."/>
            <person name="Jones J.D.G."/>
            <person name="Eneva T."/>
            <person name="Palme K."/>
            <person name="Benes V."/>
            <person name="Rechmann S."/>
            <person name="Ansorge W."/>
            <person name="Cooke R."/>
            <person name="Berger C."/>
            <person name="Delseny M."/>
            <person name="Voet M."/>
            <person name="Volckaert G."/>
            <person name="Mewes H.-W."/>
            <person name="Klosterman S."/>
            <person name="Schueller C."/>
            <person name="Chalwatzis N."/>
        </authorList>
    </citation>
    <scope>NUCLEOTIDE SEQUENCE [LARGE SCALE GENOMIC DNA]</scope>
    <source>
        <strain>cv. Columbia</strain>
    </source>
</reference>
<reference key="2">
    <citation type="journal article" date="1999" name="Nature">
        <title>Sequence and analysis of chromosome 4 of the plant Arabidopsis thaliana.</title>
        <authorList>
            <person name="Mayer K.F.X."/>
            <person name="Schueller C."/>
            <person name="Wambutt R."/>
            <person name="Murphy G."/>
            <person name="Volckaert G."/>
            <person name="Pohl T."/>
            <person name="Duesterhoeft A."/>
            <person name="Stiekema W."/>
            <person name="Entian K.-D."/>
            <person name="Terryn N."/>
            <person name="Harris B."/>
            <person name="Ansorge W."/>
            <person name="Brandt P."/>
            <person name="Grivell L.A."/>
            <person name="Rieger M."/>
            <person name="Weichselgartner M."/>
            <person name="de Simone V."/>
            <person name="Obermaier B."/>
            <person name="Mache R."/>
            <person name="Mueller M."/>
            <person name="Kreis M."/>
            <person name="Delseny M."/>
            <person name="Puigdomenech P."/>
            <person name="Watson M."/>
            <person name="Schmidtheini T."/>
            <person name="Reichert B."/>
            <person name="Portetelle D."/>
            <person name="Perez-Alonso M."/>
            <person name="Boutry M."/>
            <person name="Bancroft I."/>
            <person name="Vos P."/>
            <person name="Hoheisel J."/>
            <person name="Zimmermann W."/>
            <person name="Wedler H."/>
            <person name="Ridley P."/>
            <person name="Langham S.-A."/>
            <person name="McCullagh B."/>
            <person name="Bilham L."/>
            <person name="Robben J."/>
            <person name="van der Schueren J."/>
            <person name="Grymonprez B."/>
            <person name="Chuang Y.-J."/>
            <person name="Vandenbussche F."/>
            <person name="Braeken M."/>
            <person name="Weltjens I."/>
            <person name="Voet M."/>
            <person name="Bastiaens I."/>
            <person name="Aert R."/>
            <person name="Defoor E."/>
            <person name="Weitzenegger T."/>
            <person name="Bothe G."/>
            <person name="Ramsperger U."/>
            <person name="Hilbert H."/>
            <person name="Braun M."/>
            <person name="Holzer E."/>
            <person name="Brandt A."/>
            <person name="Peters S."/>
            <person name="van Staveren M."/>
            <person name="Dirkse W."/>
            <person name="Mooijman P."/>
            <person name="Klein Lankhorst R."/>
            <person name="Rose M."/>
            <person name="Hauf J."/>
            <person name="Koetter P."/>
            <person name="Berneiser S."/>
            <person name="Hempel S."/>
            <person name="Feldpausch M."/>
            <person name="Lamberth S."/>
            <person name="Van den Daele H."/>
            <person name="De Keyser A."/>
            <person name="Buysshaert C."/>
            <person name="Gielen J."/>
            <person name="Villarroel R."/>
            <person name="De Clercq R."/>
            <person name="van Montagu M."/>
            <person name="Rogers J."/>
            <person name="Cronin A."/>
            <person name="Quail M.A."/>
            <person name="Bray-Allen S."/>
            <person name="Clark L."/>
            <person name="Doggett J."/>
            <person name="Hall S."/>
            <person name="Kay M."/>
            <person name="Lennard N."/>
            <person name="McLay K."/>
            <person name="Mayes R."/>
            <person name="Pettett A."/>
            <person name="Rajandream M.A."/>
            <person name="Lyne M."/>
            <person name="Benes V."/>
            <person name="Rechmann S."/>
            <person name="Borkova D."/>
            <person name="Bloecker H."/>
            <person name="Scharfe M."/>
            <person name="Grimm M."/>
            <person name="Loehnert T.-H."/>
            <person name="Dose S."/>
            <person name="de Haan M."/>
            <person name="Maarse A.C."/>
            <person name="Schaefer M."/>
            <person name="Mueller-Auer S."/>
            <person name="Gabel C."/>
            <person name="Fuchs M."/>
            <person name="Fartmann B."/>
            <person name="Granderath K."/>
            <person name="Dauner D."/>
            <person name="Herzl A."/>
            <person name="Neumann S."/>
            <person name="Argiriou A."/>
            <person name="Vitale D."/>
            <person name="Liguori R."/>
            <person name="Piravandi E."/>
            <person name="Massenet O."/>
            <person name="Quigley F."/>
            <person name="Clabauld G."/>
            <person name="Muendlein A."/>
            <person name="Felber R."/>
            <person name="Schnabl S."/>
            <person name="Hiller R."/>
            <person name="Schmidt W."/>
            <person name="Lecharny A."/>
            <person name="Aubourg S."/>
            <person name="Chefdor F."/>
            <person name="Cooke R."/>
            <person name="Berger C."/>
            <person name="Monfort A."/>
            <person name="Casacuberta E."/>
            <person name="Gibbons T."/>
            <person name="Weber N."/>
            <person name="Vandenbol M."/>
            <person name="Bargues M."/>
            <person name="Terol J."/>
            <person name="Torres A."/>
            <person name="Perez-Perez A."/>
            <person name="Purnelle B."/>
            <person name="Bent E."/>
            <person name="Johnson S."/>
            <person name="Tacon D."/>
            <person name="Jesse T."/>
            <person name="Heijnen L."/>
            <person name="Schwarz S."/>
            <person name="Scholler P."/>
            <person name="Heber S."/>
            <person name="Francs P."/>
            <person name="Bielke C."/>
            <person name="Frishman D."/>
            <person name="Haase D."/>
            <person name="Lemcke K."/>
            <person name="Mewes H.-W."/>
            <person name="Stocker S."/>
            <person name="Zaccaria P."/>
            <person name="Bevan M."/>
            <person name="Wilson R.K."/>
            <person name="de la Bastide M."/>
            <person name="Habermann K."/>
            <person name="Parnell L."/>
            <person name="Dedhia N."/>
            <person name="Gnoj L."/>
            <person name="Schutz K."/>
            <person name="Huang E."/>
            <person name="Spiegel L."/>
            <person name="Sekhon M."/>
            <person name="Murray J."/>
            <person name="Sheet P."/>
            <person name="Cordes M."/>
            <person name="Abu-Threideh J."/>
            <person name="Stoneking T."/>
            <person name="Kalicki J."/>
            <person name="Graves T."/>
            <person name="Harmon G."/>
            <person name="Edwards J."/>
            <person name="Latreille P."/>
            <person name="Courtney L."/>
            <person name="Cloud J."/>
            <person name="Abbott A."/>
            <person name="Scott K."/>
            <person name="Johnson D."/>
            <person name="Minx P."/>
            <person name="Bentley D."/>
            <person name="Fulton B."/>
            <person name="Miller N."/>
            <person name="Greco T."/>
            <person name="Kemp K."/>
            <person name="Kramer J."/>
            <person name="Fulton L."/>
            <person name="Mardis E."/>
            <person name="Dante M."/>
            <person name="Pepin K."/>
            <person name="Hillier L.W."/>
            <person name="Nelson J."/>
            <person name="Spieth J."/>
            <person name="Ryan E."/>
            <person name="Andrews S."/>
            <person name="Geisel C."/>
            <person name="Layman D."/>
            <person name="Du H."/>
            <person name="Ali J."/>
            <person name="Berghoff A."/>
            <person name="Jones K."/>
            <person name="Drone K."/>
            <person name="Cotton M."/>
            <person name="Joshu C."/>
            <person name="Antonoiu B."/>
            <person name="Zidanic M."/>
            <person name="Strong C."/>
            <person name="Sun H."/>
            <person name="Lamar B."/>
            <person name="Yordan C."/>
            <person name="Ma P."/>
            <person name="Zhong J."/>
            <person name="Preston R."/>
            <person name="Vil D."/>
            <person name="Shekher M."/>
            <person name="Matero A."/>
            <person name="Shah R."/>
            <person name="Swaby I.K."/>
            <person name="O'Shaughnessy A."/>
            <person name="Rodriguez M."/>
            <person name="Hoffman J."/>
            <person name="Till S."/>
            <person name="Granat S."/>
            <person name="Shohdy N."/>
            <person name="Hasegawa A."/>
            <person name="Hameed A."/>
            <person name="Lodhi M."/>
            <person name="Johnson A."/>
            <person name="Chen E."/>
            <person name="Marra M.A."/>
            <person name="Martienssen R."/>
            <person name="McCombie W.R."/>
        </authorList>
    </citation>
    <scope>NUCLEOTIDE SEQUENCE [LARGE SCALE GENOMIC DNA]</scope>
    <source>
        <strain>cv. Columbia</strain>
    </source>
</reference>
<reference key="3">
    <citation type="journal article" date="2017" name="Plant J.">
        <title>Araport11: a complete reannotation of the Arabidopsis thaliana reference genome.</title>
        <authorList>
            <person name="Cheng C.Y."/>
            <person name="Krishnakumar V."/>
            <person name="Chan A.P."/>
            <person name="Thibaud-Nissen F."/>
            <person name="Schobel S."/>
            <person name="Town C.D."/>
        </authorList>
    </citation>
    <scope>GENOME REANNOTATION</scope>
    <scope>SEQUENCE REVISION</scope>
    <source>
        <strain>cv. Columbia</strain>
    </source>
</reference>
<accession>P0C042</accession>
<accession>F4JKY7</accession>
<accession>O23446</accession>
<evidence type="ECO:0000305" key="1"/>
<sequence length="367" mass="43011">MAQMLLRGSMSRVAGRCRSEFGDLPNWCLSTTTHHQEDLKKLGKILTEAATEDKTVIITTLNKAWSEPNSTFDLFLHSFHVGKGTKPLLRHLVVACLDEEAYSRCSEVHPHRCYFMKTPGIDFAGDKMFMTPDYLKMMWRRIEFLGTLLKLRYNFIFTIPFPRLSKEVDFQIACDRYSGDDKDIHNAVNGGFAFVKANQRTIDFYNYWYMSRLRYPDRHDQDVLDQIKGGGYPAKIGLKMRFLDTKYFGGFCEPSRDLDKVCTMHANCCVGLENKIKDLRQVIVDWENYVSAAKTTDGQIMTWRDPENCMKQWWWRNKTKQVLSENSKENYLNIMLFIKTYIILNFCLPMNNIRKFFFCFGSIFVNR</sequence>
<gene>
    <name type="ordered locus">At4g15970</name>
    <name type="ORF">dl4025w</name>
    <name type="ORF">FCAALL.245</name>
</gene>
<organism>
    <name type="scientific">Arabidopsis thaliana</name>
    <name type="common">Mouse-ear cress</name>
    <dbReference type="NCBI Taxonomy" id="3702"/>
    <lineage>
        <taxon>Eukaryota</taxon>
        <taxon>Viridiplantae</taxon>
        <taxon>Streptophyta</taxon>
        <taxon>Embryophyta</taxon>
        <taxon>Tracheophyta</taxon>
        <taxon>Spermatophyta</taxon>
        <taxon>Magnoliopsida</taxon>
        <taxon>eudicotyledons</taxon>
        <taxon>Gunneridae</taxon>
        <taxon>Pentapetalae</taxon>
        <taxon>rosids</taxon>
        <taxon>malvids</taxon>
        <taxon>Brassicales</taxon>
        <taxon>Brassicaceae</taxon>
        <taxon>Camelineae</taxon>
        <taxon>Arabidopsis</taxon>
    </lineage>
</organism>